<proteinExistence type="inferred from homology"/>
<comment type="function">
    <text evidence="1">SNARE required for protein transport between the ER and the Golgi complex.</text>
</comment>
<comment type="subcellular location">
    <subcellularLocation>
        <location evidence="1">Golgi apparatus membrane</location>
        <topology evidence="1">Single-pass type IV membrane protein</topology>
    </subcellularLocation>
    <subcellularLocation>
        <location evidence="1">Endoplasmic reticulum membrane</location>
        <topology evidence="1">Single-pass type IV membrane protein</topology>
    </subcellularLocation>
</comment>
<comment type="similarity">
    <text evidence="4">Belongs to the BOS1 family.</text>
</comment>
<feature type="chain" id="PRO_0000207553" description="Protein transport protein BOS1">
    <location>
        <begin position="1"/>
        <end position="229"/>
    </location>
</feature>
<feature type="topological domain" description="Cytoplasmic" evidence="2">
    <location>
        <begin position="1"/>
        <end position="207"/>
    </location>
</feature>
<feature type="transmembrane region" description="Helical; Anchor for type IV membrane protein" evidence="2">
    <location>
        <begin position="208"/>
        <end position="228"/>
    </location>
</feature>
<feature type="topological domain" description="Vesicular" evidence="2">
    <location>
        <position position="229"/>
    </location>
</feature>
<feature type="region of interest" description="Disordered" evidence="3">
    <location>
        <begin position="89"/>
        <end position="135"/>
    </location>
</feature>
<feature type="compositionally biased region" description="Basic and acidic residues" evidence="3">
    <location>
        <begin position="89"/>
        <end position="106"/>
    </location>
</feature>
<evidence type="ECO:0000250" key="1"/>
<evidence type="ECO:0000255" key="2"/>
<evidence type="ECO:0000256" key="3">
    <source>
        <dbReference type="SAM" id="MobiDB-lite"/>
    </source>
</evidence>
<evidence type="ECO:0000305" key="4"/>
<organism>
    <name type="scientific">Debaryomyces hansenii (strain ATCC 36239 / CBS 767 / BCRC 21394 / JCM 1990 / NBRC 0083 / IGC 2968)</name>
    <name type="common">Yeast</name>
    <name type="synonym">Torulaspora hansenii</name>
    <dbReference type="NCBI Taxonomy" id="284592"/>
    <lineage>
        <taxon>Eukaryota</taxon>
        <taxon>Fungi</taxon>
        <taxon>Dikarya</taxon>
        <taxon>Ascomycota</taxon>
        <taxon>Saccharomycotina</taxon>
        <taxon>Pichiomycetes</taxon>
        <taxon>Debaryomycetaceae</taxon>
        <taxon>Debaryomyces</taxon>
    </lineage>
</organism>
<reference key="1">
    <citation type="journal article" date="2004" name="Nature">
        <title>Genome evolution in yeasts.</title>
        <authorList>
            <person name="Dujon B."/>
            <person name="Sherman D."/>
            <person name="Fischer G."/>
            <person name="Durrens P."/>
            <person name="Casaregola S."/>
            <person name="Lafontaine I."/>
            <person name="de Montigny J."/>
            <person name="Marck C."/>
            <person name="Neuveglise C."/>
            <person name="Talla E."/>
            <person name="Goffard N."/>
            <person name="Frangeul L."/>
            <person name="Aigle M."/>
            <person name="Anthouard V."/>
            <person name="Babour A."/>
            <person name="Barbe V."/>
            <person name="Barnay S."/>
            <person name="Blanchin S."/>
            <person name="Beckerich J.-M."/>
            <person name="Beyne E."/>
            <person name="Bleykasten C."/>
            <person name="Boisrame A."/>
            <person name="Boyer J."/>
            <person name="Cattolico L."/>
            <person name="Confanioleri F."/>
            <person name="de Daruvar A."/>
            <person name="Despons L."/>
            <person name="Fabre E."/>
            <person name="Fairhead C."/>
            <person name="Ferry-Dumazet H."/>
            <person name="Groppi A."/>
            <person name="Hantraye F."/>
            <person name="Hennequin C."/>
            <person name="Jauniaux N."/>
            <person name="Joyet P."/>
            <person name="Kachouri R."/>
            <person name="Kerrest A."/>
            <person name="Koszul R."/>
            <person name="Lemaire M."/>
            <person name="Lesur I."/>
            <person name="Ma L."/>
            <person name="Muller H."/>
            <person name="Nicaud J.-M."/>
            <person name="Nikolski M."/>
            <person name="Oztas S."/>
            <person name="Ozier-Kalogeropoulos O."/>
            <person name="Pellenz S."/>
            <person name="Potier S."/>
            <person name="Richard G.-F."/>
            <person name="Straub M.-L."/>
            <person name="Suleau A."/>
            <person name="Swennen D."/>
            <person name="Tekaia F."/>
            <person name="Wesolowski-Louvel M."/>
            <person name="Westhof E."/>
            <person name="Wirth B."/>
            <person name="Zeniou-Meyer M."/>
            <person name="Zivanovic Y."/>
            <person name="Bolotin-Fukuhara M."/>
            <person name="Thierry A."/>
            <person name="Bouchier C."/>
            <person name="Caudron B."/>
            <person name="Scarpelli C."/>
            <person name="Gaillardin C."/>
            <person name="Weissenbach J."/>
            <person name="Wincker P."/>
            <person name="Souciet J.-L."/>
        </authorList>
    </citation>
    <scope>NUCLEOTIDE SEQUENCE [LARGE SCALE GENOMIC DNA]</scope>
    <source>
        <strain>ATCC 36239 / CBS 767 / BCRC 21394 / JCM 1990 / NBRC 0083 / IGC 2968</strain>
    </source>
</reference>
<name>BOS1_DEBHA</name>
<dbReference type="EMBL" id="CR382135">
    <property type="protein sequence ID" value="CAG85773.1"/>
    <property type="molecule type" value="Genomic_DNA"/>
</dbReference>
<dbReference type="RefSeq" id="XP_457745.1">
    <property type="nucleotide sequence ID" value="XM_457745.1"/>
</dbReference>
<dbReference type="SMR" id="Q6BVM4"/>
<dbReference type="FunCoup" id="Q6BVM4">
    <property type="interactions" value="69"/>
</dbReference>
<dbReference type="STRING" id="284592.Q6BVM4"/>
<dbReference type="GeneID" id="2900850"/>
<dbReference type="KEGG" id="dha:DEHA2C01452g"/>
<dbReference type="VEuPathDB" id="FungiDB:DEHA2C01452g"/>
<dbReference type="eggNOG" id="KOG3251">
    <property type="taxonomic scope" value="Eukaryota"/>
</dbReference>
<dbReference type="HOGENOM" id="CLU_078260_1_0_1"/>
<dbReference type="InParanoid" id="Q6BVM4"/>
<dbReference type="OMA" id="FCWLVIH"/>
<dbReference type="OrthoDB" id="158360at2759"/>
<dbReference type="Proteomes" id="UP000000599">
    <property type="component" value="Chromosome C"/>
</dbReference>
<dbReference type="GO" id="GO:0005789">
    <property type="term" value="C:endoplasmic reticulum membrane"/>
    <property type="evidence" value="ECO:0007669"/>
    <property type="project" value="UniProtKB-SubCell"/>
</dbReference>
<dbReference type="GO" id="GO:0012507">
    <property type="term" value="C:ER to Golgi transport vesicle membrane"/>
    <property type="evidence" value="ECO:0007669"/>
    <property type="project" value="TreeGrafter"/>
</dbReference>
<dbReference type="GO" id="GO:0000139">
    <property type="term" value="C:Golgi membrane"/>
    <property type="evidence" value="ECO:0007669"/>
    <property type="project" value="UniProtKB-SubCell"/>
</dbReference>
<dbReference type="GO" id="GO:0031902">
    <property type="term" value="C:late endosome membrane"/>
    <property type="evidence" value="ECO:0007669"/>
    <property type="project" value="TreeGrafter"/>
</dbReference>
<dbReference type="GO" id="GO:0031201">
    <property type="term" value="C:SNARE complex"/>
    <property type="evidence" value="ECO:0007669"/>
    <property type="project" value="TreeGrafter"/>
</dbReference>
<dbReference type="GO" id="GO:0005484">
    <property type="term" value="F:SNAP receptor activity"/>
    <property type="evidence" value="ECO:0007669"/>
    <property type="project" value="InterPro"/>
</dbReference>
<dbReference type="GO" id="GO:0000149">
    <property type="term" value="F:SNARE binding"/>
    <property type="evidence" value="ECO:0007669"/>
    <property type="project" value="TreeGrafter"/>
</dbReference>
<dbReference type="GO" id="GO:0006888">
    <property type="term" value="P:endoplasmic reticulum to Golgi vesicle-mediated transport"/>
    <property type="evidence" value="ECO:0007669"/>
    <property type="project" value="TreeGrafter"/>
</dbReference>
<dbReference type="GO" id="GO:0015031">
    <property type="term" value="P:protein transport"/>
    <property type="evidence" value="ECO:0007669"/>
    <property type="project" value="UniProtKB-KW"/>
</dbReference>
<dbReference type="GO" id="GO:0006906">
    <property type="term" value="P:vesicle fusion"/>
    <property type="evidence" value="ECO:0007669"/>
    <property type="project" value="TreeGrafter"/>
</dbReference>
<dbReference type="Gene3D" id="1.20.5.110">
    <property type="match status" value="1"/>
</dbReference>
<dbReference type="InterPro" id="IPR027027">
    <property type="entry name" value="GOSR2/Membrin/Bos1"/>
</dbReference>
<dbReference type="PANTHER" id="PTHR21230:SF1">
    <property type="entry name" value="GOLGI SNAP RECEPTOR COMPLEX MEMBER 2"/>
    <property type="match status" value="1"/>
</dbReference>
<dbReference type="PANTHER" id="PTHR21230">
    <property type="entry name" value="VESICLE TRANSPORT V-SNARE PROTEIN VTI1-RELATED"/>
    <property type="match status" value="1"/>
</dbReference>
<dbReference type="Pfam" id="PF12352">
    <property type="entry name" value="V-SNARE_C"/>
    <property type="match status" value="1"/>
</dbReference>
<dbReference type="PIRSF" id="PIRSF028865">
    <property type="entry name" value="Membrin-2"/>
    <property type="match status" value="1"/>
</dbReference>
<protein>
    <recommendedName>
        <fullName>Protein transport protein BOS1</fullName>
    </recommendedName>
</protein>
<sequence>MNSLYNHGIKQTQLITKDLSSFEKSLSTSPLSLQGSITTSLTAFKKTIREYNDLVAQNKKDESNAKHEARLAKFNQDLQDFTSKFDSLKKQRDQALQETNKQELLGRRHTTQRQQYGENPYDTGPTQQQQQQQMSYQEGLYKEKTSLARGTQQLDHILDMGQQAFEDIVEQNETLRRLQSKFEDGLVTLGVSQGTIRTIEKRAKQDKWLFWAAFVFTLVCFWYILKIFR</sequence>
<keyword id="KW-0256">Endoplasmic reticulum</keyword>
<keyword id="KW-0931">ER-Golgi transport</keyword>
<keyword id="KW-0333">Golgi apparatus</keyword>
<keyword id="KW-0472">Membrane</keyword>
<keyword id="KW-0653">Protein transport</keyword>
<keyword id="KW-1185">Reference proteome</keyword>
<keyword id="KW-0812">Transmembrane</keyword>
<keyword id="KW-1133">Transmembrane helix</keyword>
<keyword id="KW-0813">Transport</keyword>
<gene>
    <name type="primary">BOS1</name>
    <name type="ordered locus">DEHA2C01452g</name>
</gene>
<accession>Q6BVM4</accession>